<accession>Q5WGF4</accession>
<name>Y2016_SHOC1</name>
<gene>
    <name type="ordered locus">ABC2016</name>
</gene>
<proteinExistence type="inferred from homology"/>
<feature type="chain" id="PRO_0000267152" description="UPF0398 protein ABC2016">
    <location>
        <begin position="1"/>
        <end position="188"/>
    </location>
</feature>
<dbReference type="EMBL" id="AP006627">
    <property type="protein sequence ID" value="BAD64551.1"/>
    <property type="molecule type" value="Genomic_DNA"/>
</dbReference>
<dbReference type="RefSeq" id="WP_011246859.1">
    <property type="nucleotide sequence ID" value="NC_006582.1"/>
</dbReference>
<dbReference type="SMR" id="Q5WGF4"/>
<dbReference type="STRING" id="66692.ABC2016"/>
<dbReference type="KEGG" id="bcl:ABC2016"/>
<dbReference type="eggNOG" id="COG4474">
    <property type="taxonomic scope" value="Bacteria"/>
</dbReference>
<dbReference type="HOGENOM" id="CLU_105319_0_0_9"/>
<dbReference type="OrthoDB" id="2301957at2"/>
<dbReference type="Proteomes" id="UP000001168">
    <property type="component" value="Chromosome"/>
</dbReference>
<dbReference type="Gene3D" id="3.40.50.450">
    <property type="match status" value="1"/>
</dbReference>
<dbReference type="HAMAP" id="MF_01575">
    <property type="entry name" value="UPF0398"/>
    <property type="match status" value="1"/>
</dbReference>
<dbReference type="InterPro" id="IPR010697">
    <property type="entry name" value="YspA"/>
</dbReference>
<dbReference type="NCBIfam" id="NF010181">
    <property type="entry name" value="PRK13660.1"/>
    <property type="match status" value="1"/>
</dbReference>
<dbReference type="PANTHER" id="PTHR38440:SF1">
    <property type="entry name" value="UPF0398 PROTEIN SPR0331"/>
    <property type="match status" value="1"/>
</dbReference>
<dbReference type="PANTHER" id="PTHR38440">
    <property type="entry name" value="UPF0398 PROTEIN YPSA"/>
    <property type="match status" value="1"/>
</dbReference>
<dbReference type="Pfam" id="PF06908">
    <property type="entry name" value="YpsA"/>
    <property type="match status" value="1"/>
</dbReference>
<dbReference type="PIRSF" id="PIRSF021290">
    <property type="entry name" value="DUF1273"/>
    <property type="match status" value="1"/>
</dbReference>
<dbReference type="SUPFAM" id="SSF102405">
    <property type="entry name" value="MCP/YpsA-like"/>
    <property type="match status" value="1"/>
</dbReference>
<comment type="similarity">
    <text evidence="1">Belongs to the UPF0398 family.</text>
</comment>
<reference key="1">
    <citation type="submission" date="2003-10" db="EMBL/GenBank/DDBJ databases">
        <title>The complete genome sequence of the alkaliphilic Bacillus clausii KSM-K16.</title>
        <authorList>
            <person name="Takaki Y."/>
            <person name="Kageyama Y."/>
            <person name="Shimamura S."/>
            <person name="Suzuki H."/>
            <person name="Nishi S."/>
            <person name="Hatada Y."/>
            <person name="Kawai S."/>
            <person name="Ito S."/>
            <person name="Horikoshi K."/>
        </authorList>
    </citation>
    <scope>NUCLEOTIDE SEQUENCE [LARGE SCALE GENOMIC DNA]</scope>
    <source>
        <strain>KSM-K16</strain>
    </source>
</reference>
<sequence>MNKEGRAIHSLLVTGYKAHELGIFQESHQGVHYLKKTIENRLRPFIEEGTEWIITSGQLGVEQWAADVVFSLKETAYPHIKLAILPPFEGQEANWSQAAQERYAARLAMADFVECISKRPYEHVGQLRQKNDFLVQRTDGLLVLYDEEKQGSPLYYIASAKAQGKPIFYISPEEVEETVRQDQYDDFL</sequence>
<protein>
    <recommendedName>
        <fullName evidence="1">UPF0398 protein ABC2016</fullName>
    </recommendedName>
</protein>
<keyword id="KW-1185">Reference proteome</keyword>
<organism>
    <name type="scientific">Shouchella clausii (strain KSM-K16)</name>
    <name type="common">Alkalihalobacillus clausii</name>
    <dbReference type="NCBI Taxonomy" id="66692"/>
    <lineage>
        <taxon>Bacteria</taxon>
        <taxon>Bacillati</taxon>
        <taxon>Bacillota</taxon>
        <taxon>Bacilli</taxon>
        <taxon>Bacillales</taxon>
        <taxon>Bacillaceae</taxon>
        <taxon>Shouchella</taxon>
    </lineage>
</organism>
<evidence type="ECO:0000255" key="1">
    <source>
        <dbReference type="HAMAP-Rule" id="MF_01575"/>
    </source>
</evidence>